<comment type="function">
    <text evidence="1">Component of the entry fusion complex (EFC), which consists of 11 proteins. During cell infection, this complex mediates entry of the virion core into the host cytoplasm by a two-step mechanism consisting of lipid mixing of the viral and cellular membranes and subsequent pore formation.</text>
</comment>
<comment type="subunit">
    <text evidence="1">Interacts with OPG099/L5. Component of the entry fusion complex (EFC) composed of OPG053, OPG076, OPG086, OPG094, OPG095, OPG099, OPG107, OPG143, OPG104, OPG147 and OPG155. Except for OPG095 and OPG053, each of the EFC proteins is required for assembly or stability of the complex.</text>
</comment>
<comment type="subcellular location">
    <subcellularLocation>
        <location evidence="1">Virion membrane</location>
        <topology evidence="1">Single-pass membrane protein</topology>
    </subcellularLocation>
    <text evidence="1">Component of the mature virion (MV) membrane.</text>
</comment>
<comment type="induction">
    <text evidence="1">Expressed in the late phase of the viral replicative cycle.</text>
</comment>
<comment type="PTM">
    <text evidence="1">Unglycosylated because produced in viral factories instead of the classic ER -Golgi route.</text>
</comment>
<comment type="similarity">
    <text evidence="3">Belongs to the orthopoxvirus OPG086 family.</text>
</comment>
<evidence type="ECO:0000250" key="1">
    <source>
        <dbReference type="UniProtKB" id="P68458"/>
    </source>
</evidence>
<evidence type="ECO:0000255" key="2"/>
<evidence type="ECO:0000305" key="3"/>
<keyword id="KW-1169">Fusion of virus membrane with host cell membrane</keyword>
<keyword id="KW-1168">Fusion of virus membrane with host membrane</keyword>
<keyword id="KW-0426">Late protein</keyword>
<keyword id="KW-0472">Membrane</keyword>
<keyword id="KW-1185">Reference proteome</keyword>
<keyword id="KW-0735">Signal-anchor</keyword>
<keyword id="KW-0812">Transmembrane</keyword>
<keyword id="KW-1133">Transmembrane helix</keyword>
<keyword id="KW-0261">Viral envelope protein</keyword>
<keyword id="KW-1162">Viral penetration into host cytoplasm</keyword>
<keyword id="KW-0946">Virion</keyword>
<keyword id="KW-1160">Virus entry into host cell</keyword>
<organism>
    <name type="scientific">Variola virus (isolate Human/India/Ind3/1967)</name>
    <name type="common">VARV</name>
    <name type="synonym">Smallpox virus</name>
    <dbReference type="NCBI Taxonomy" id="587200"/>
    <lineage>
        <taxon>Viruses</taxon>
        <taxon>Varidnaviria</taxon>
        <taxon>Bamfordvirae</taxon>
        <taxon>Nucleocytoviricota</taxon>
        <taxon>Pokkesviricetes</taxon>
        <taxon>Chitovirales</taxon>
        <taxon>Poxviridae</taxon>
        <taxon>Chordopoxvirinae</taxon>
        <taxon>Orthopoxvirus</taxon>
        <taxon>Variola virus</taxon>
    </lineage>
</organism>
<gene>
    <name type="primary">OPG086</name>
    <name type="ORF">G3L</name>
</gene>
<proteinExistence type="inferred from homology"/>
<reference key="1">
    <citation type="journal article" date="1993" name="Virus Res.">
        <title>Analysis of the nucleotide sequence of a 43 kbp segment of the genome of variola virus India-1967 strain.</title>
        <authorList>
            <person name="Shchelkunov S.N."/>
            <person name="Blinov V.M."/>
            <person name="Resenchuk S.M."/>
            <person name="Totmenin A.V."/>
            <person name="Sandakhchiev L.S."/>
        </authorList>
    </citation>
    <scope>NUCLEOTIDE SEQUENCE [GENOMIC DNA]</scope>
</reference>
<reference key="2">
    <citation type="journal article" date="1993" name="Virus Res.">
        <title>Nucleotide sequence analysis of variola virus HindIII M, L, I genome fragments.</title>
        <authorList>
            <person name="Shchelkunov S.N."/>
            <person name="Blinov V.M."/>
            <person name="Totmenin A.V."/>
            <person name="Marennikova S.S."/>
            <person name="Kolykhalov A.A."/>
            <person name="Frolov I.V."/>
            <person name="Chizhikov V.E."/>
            <person name="Gytorov V.V."/>
            <person name="Gashikov P.V."/>
            <person name="Belanov E.F."/>
            <person name="Belavin P.A."/>
            <person name="Resenchuk S.M."/>
            <person name="Andzhaparidze O.G."/>
            <person name="Sandakhchiev L.S."/>
        </authorList>
    </citation>
    <scope>NUCLEOTIDE SEQUENCE [GENOMIC DNA]</scope>
</reference>
<reference key="3">
    <citation type="journal article" date="1993" name="FEBS Lett.">
        <title>Genes of variola and vaccinia viruses necessary to overcome the host protective mechanisms.</title>
        <authorList>
            <person name="Shchelkunov S.N."/>
            <person name="Blinov V.M."/>
            <person name="Sandakhchiev L.S."/>
        </authorList>
    </citation>
    <scope>NUCLEOTIDE SEQUENCE [LARGE SCALE GENOMIC DNA]</scope>
</reference>
<feature type="chain" id="PRO_0000099529" description="Entry-fusion complex protein OPG086">
    <location>
        <begin position="1"/>
        <end position="111"/>
    </location>
</feature>
<feature type="transmembrane region" description="Helical; Signal-anchor" evidence="2">
    <location>
        <begin position="1"/>
        <end position="21"/>
    </location>
</feature>
<feature type="topological domain" description="Virion surface" evidence="2">
    <location>
        <begin position="22"/>
        <end position="111"/>
    </location>
</feature>
<organismHost>
    <name type="scientific">Homo sapiens</name>
    <name type="common">Human</name>
    <dbReference type="NCBI Taxonomy" id="9606"/>
</organismHost>
<protein>
    <recommendedName>
        <fullName>Entry-fusion complex protein OPG086</fullName>
        <shortName>EFC protein OPG086</shortName>
    </recommendedName>
    <alternativeName>
        <fullName>Protein G3</fullName>
    </alternativeName>
</protein>
<dbReference type="EMBL" id="X67119">
    <property type="protein sequence ID" value="CAA47564.1"/>
    <property type="molecule type" value="Genomic_DNA"/>
</dbReference>
<dbReference type="EMBL" id="X69198">
    <property type="protein sequence ID" value="CAA49005.1"/>
    <property type="molecule type" value="Genomic_DNA"/>
</dbReference>
<dbReference type="PIR" id="S33079">
    <property type="entry name" value="S33079"/>
</dbReference>
<dbReference type="SMR" id="P0DOM3"/>
<dbReference type="KEGG" id="vg:1486430"/>
<dbReference type="Proteomes" id="UP000002060">
    <property type="component" value="Segment"/>
</dbReference>
<dbReference type="GO" id="GO:0016020">
    <property type="term" value="C:membrane"/>
    <property type="evidence" value="ECO:0007669"/>
    <property type="project" value="UniProtKB-KW"/>
</dbReference>
<dbReference type="GO" id="GO:0019031">
    <property type="term" value="C:viral envelope"/>
    <property type="evidence" value="ECO:0007669"/>
    <property type="project" value="UniProtKB-KW"/>
</dbReference>
<dbReference type="GO" id="GO:0055036">
    <property type="term" value="C:virion membrane"/>
    <property type="evidence" value="ECO:0007669"/>
    <property type="project" value="UniProtKB-SubCell"/>
</dbReference>
<dbReference type="GO" id="GO:0019064">
    <property type="term" value="P:fusion of virus membrane with host plasma membrane"/>
    <property type="evidence" value="ECO:0007669"/>
    <property type="project" value="UniProtKB-KW"/>
</dbReference>
<dbReference type="GO" id="GO:0046718">
    <property type="term" value="P:symbiont entry into host cell"/>
    <property type="evidence" value="ECO:0007669"/>
    <property type="project" value="UniProtKB-KW"/>
</dbReference>
<dbReference type="InterPro" id="IPR010367">
    <property type="entry name" value="Poxvirus_G3"/>
</dbReference>
<dbReference type="Pfam" id="PF06129">
    <property type="entry name" value="Chordopox_G3"/>
    <property type="match status" value="1"/>
</dbReference>
<accession>P0DOM3</accession>
<accession>P32993</accession>
<name>PG086_VAR67</name>
<sequence length="111" mass="12820">MASLLYFILFLLFVCISYYFTYYPTNKLQAAVMETDRENAIIIQRNDEIPTRTLDTAIFTDASTVASAQIYLYYNSNIGKIIMSLNGKKHTFNLYDDNDIRTLLPILLLSK</sequence>